<protein>
    <recommendedName>
        <fullName evidence="2">Portal protein</fullName>
    </recommendedName>
    <alternativeName>
        <fullName evidence="2">Head-to-tail connector</fullName>
    </alternativeName>
</protein>
<name>PORTL_BPSP6</name>
<organismHost>
    <name type="scientific">Salmonella typhimurium</name>
    <dbReference type="NCBI Taxonomy" id="90371"/>
</organismHost>
<sequence length="515" mass="57903">MQDTILEYGGQRSKIPKLWEKFSKKRSPYLDRAKHFAKLTLPYLMNNKGDNETSQNGWQGVGAQATNHLANKLAQVLFPAQRSFFRVDLTAKGEKVLDDRGLKKTQLATIFARVETTAMKALEQRQFRPAIVEVFKHLIVAGNCLLYKPSKGAMSAVPMHHYVVNRDTNGDLMDVILLQEKALRTFDPATRMAIEVGMKGKKCKEDDNVKLYTHAQYAGEGFWKINQSADDIPVGKESRIKSEKLPFIPLTWKRSYGEDWGRPLAEDYSGDLFVIQFLSEAMARGAALMADIKYLIRPGSQTDVDHFVNSGTGEVITGVAEDIHIVQLGKYADLTPISAVLEVYTRRIGVIFMMETMTRRDAERVTAVEIQRDALEIEQNMGGVYSLFAMTMQTPIAMWGLQEAGDSFTSELVDPVIVTGIEALGRMAELDKLANFAQYMSLPQTWPEPAQRAIRWGDYMDWVRGQISAELPFLKSEEEMQQEMAQQAQAQQEAMLNEGVAKAVPGVIQQEMKEG</sequence>
<accession>Q7Y5P0</accession>
<evidence type="ECO:0000250" key="1">
    <source>
        <dbReference type="UniProtKB" id="P03728"/>
    </source>
</evidence>
<evidence type="ECO:0000305" key="2"/>
<evidence type="ECO:0000312" key="3">
    <source>
        <dbReference type="EMBL" id="AAP48769.1"/>
    </source>
</evidence>
<evidence type="ECO:0000312" key="4">
    <source>
        <dbReference type="Proteomes" id="UP000001721"/>
    </source>
</evidence>
<proteinExistence type="inferred from homology"/>
<organism evidence="4">
    <name type="scientific">Enterobacteria phage SP6</name>
    <name type="common">Bacteriophage SP6</name>
    <dbReference type="NCBI Taxonomy" id="2907955"/>
    <lineage>
        <taxon>Viruses</taxon>
        <taxon>Duplodnaviria</taxon>
        <taxon>Heunggongvirae</taxon>
        <taxon>Uroviricota</taxon>
        <taxon>Caudoviricetes</taxon>
        <taxon>Autographiviridae</taxon>
        <taxon>Molineuxvirinae</taxon>
        <taxon>Zindervirus</taxon>
        <taxon>Zindervirus SP6</taxon>
    </lineage>
</organism>
<feature type="chain" id="PRO_0000432543" description="Portal protein">
    <location>
        <begin position="1"/>
        <end position="515"/>
    </location>
</feature>
<dbReference type="EMBL" id="AY288927">
    <property type="protein sequence ID" value="AAP48769.1"/>
    <property type="molecule type" value="Genomic_DNA"/>
</dbReference>
<dbReference type="EMBL" id="AY370673">
    <property type="protein sequence ID" value="AAR90021.1"/>
    <property type="molecule type" value="Genomic_DNA"/>
</dbReference>
<dbReference type="RefSeq" id="NP_853590.1">
    <property type="nucleotide sequence ID" value="NC_004831.2"/>
</dbReference>
<dbReference type="SMR" id="Q7Y5P0"/>
<dbReference type="KEGG" id="vg:1481798"/>
<dbReference type="Proteomes" id="UP000000843">
    <property type="component" value="Genome"/>
</dbReference>
<dbReference type="Proteomes" id="UP000001721">
    <property type="component" value="Genome"/>
</dbReference>
<dbReference type="GO" id="GO:0019028">
    <property type="term" value="C:viral capsid"/>
    <property type="evidence" value="ECO:0007669"/>
    <property type="project" value="UniProtKB-KW"/>
</dbReference>
<dbReference type="GO" id="GO:0099002">
    <property type="term" value="P:symbiont genome ejection through host cell envelope, short tail mechanism"/>
    <property type="evidence" value="ECO:0007669"/>
    <property type="project" value="UniProtKB-KW"/>
</dbReference>
<dbReference type="InterPro" id="IPR020991">
    <property type="entry name" value="Connector_podovirus"/>
</dbReference>
<dbReference type="Pfam" id="PF12236">
    <property type="entry name" value="Head-tail_con"/>
    <property type="match status" value="1"/>
</dbReference>
<gene>
    <name evidence="3" type="primary">30</name>
</gene>
<comment type="function">
    <text evidence="1">Forms the portal vertex of the capsid. This portal plays critical roles in head assembly, genome packaging, neck/tail attachment, and genome ejection. The portal protein multimerizes as a single ring-shaped homododecamer arranged around a central channel.</text>
</comment>
<comment type="subunit">
    <text evidence="1">Homododecamer.</text>
</comment>
<comment type="subcellular location">
    <subcellularLocation>
        <location evidence="1">Virion</location>
    </subcellularLocation>
</comment>
<comment type="similarity">
    <text evidence="2">Belongs to the podoviridae head-to-tail connector protein family.</text>
</comment>
<keyword id="KW-0167">Capsid protein</keyword>
<keyword id="KW-1185">Reference proteome</keyword>
<keyword id="KW-0118">Viral capsid assembly</keyword>
<keyword id="KW-1171">Viral genome ejection through host cell envelope</keyword>
<keyword id="KW-0231">Viral genome packaging</keyword>
<keyword id="KW-1162">Viral penetration into host cytoplasm</keyword>
<keyword id="KW-1188">Viral release from host cell</keyword>
<keyword id="KW-1244">Viral short tail ejection system</keyword>
<keyword id="KW-0946">Virion</keyword>
<keyword id="KW-1160">Virus entry into host cell</keyword>
<reference key="1">
    <citation type="journal article" date="2004" name="J. Bacteriol.">
        <title>Complete genomic sequence of the virulent Salmonella bacteriophage SP6.</title>
        <authorList>
            <person name="Dobbins A.T."/>
            <person name="George M. Jr."/>
            <person name="Basham D.A."/>
            <person name="Ford M.E."/>
            <person name="Houtz J.M."/>
            <person name="Pedulla M.L."/>
            <person name="Lawrence J.G."/>
            <person name="Hatfull G.F."/>
            <person name="Hendrix R.W."/>
        </authorList>
    </citation>
    <scope>NUCLEOTIDE SEQUENCE [GENOMIC DNA]</scope>
</reference>
<reference key="2">
    <citation type="journal article" date="2004" name="J. Mol. Biol.">
        <title>Genomic analysis of bacteriophages SP6 and K1-5, an estranged subgroup of the T7 supergroup.</title>
        <authorList>
            <person name="Scholl D."/>
            <person name="Kieleczawa J."/>
            <person name="Kemp P."/>
            <person name="Rush J."/>
            <person name="Richardson C.C."/>
            <person name="Merril C."/>
            <person name="Adhya S."/>
            <person name="Molineux I.J."/>
        </authorList>
    </citation>
    <scope>NUCLEOTIDE SEQUENCE [GENOMIC DNA]</scope>
</reference>
<reference key="3">
    <citation type="submission" date="1999-06" db="EMBL/GenBank/DDBJ databases">
        <authorList>
            <person name="Tseng T.Y."/>
            <person name="Frick D.N."/>
            <person name="Richardson C.C."/>
        </authorList>
    </citation>
    <scope>NUCLEOTIDE SEQUENCE [GENOMIC DNA]</scope>
</reference>